<feature type="chain" id="PRO_1000096445" description="dCTP deaminase">
    <location>
        <begin position="1"/>
        <end position="184"/>
    </location>
</feature>
<feature type="active site" description="Proton donor/acceptor" evidence="1">
    <location>
        <position position="133"/>
    </location>
</feature>
<feature type="binding site" evidence="1">
    <location>
        <begin position="107"/>
        <end position="112"/>
    </location>
    <ligand>
        <name>dCTP</name>
        <dbReference type="ChEBI" id="CHEBI:61481"/>
    </ligand>
</feature>
<feature type="binding site" evidence="1">
    <location>
        <begin position="131"/>
        <end position="133"/>
    </location>
    <ligand>
        <name>dCTP</name>
        <dbReference type="ChEBI" id="CHEBI:61481"/>
    </ligand>
</feature>
<feature type="binding site" evidence="1">
    <location>
        <position position="152"/>
    </location>
    <ligand>
        <name>dCTP</name>
        <dbReference type="ChEBI" id="CHEBI:61481"/>
    </ligand>
</feature>
<feature type="binding site" evidence="1">
    <location>
        <position position="166"/>
    </location>
    <ligand>
        <name>dCTP</name>
        <dbReference type="ChEBI" id="CHEBI:61481"/>
    </ligand>
</feature>
<feature type="binding site" evidence="1">
    <location>
        <position position="176"/>
    </location>
    <ligand>
        <name>dCTP</name>
        <dbReference type="ChEBI" id="CHEBI:61481"/>
    </ligand>
</feature>
<comment type="function">
    <text evidence="1">Catalyzes the deamination of dCTP to dUTP.</text>
</comment>
<comment type="catalytic activity">
    <reaction evidence="1">
        <text>dCTP + H2O + H(+) = dUTP + NH4(+)</text>
        <dbReference type="Rhea" id="RHEA:22680"/>
        <dbReference type="ChEBI" id="CHEBI:15377"/>
        <dbReference type="ChEBI" id="CHEBI:15378"/>
        <dbReference type="ChEBI" id="CHEBI:28938"/>
        <dbReference type="ChEBI" id="CHEBI:61481"/>
        <dbReference type="ChEBI" id="CHEBI:61555"/>
        <dbReference type="EC" id="3.5.4.13"/>
    </reaction>
</comment>
<comment type="pathway">
    <text evidence="1">Pyrimidine metabolism; dUMP biosynthesis; dUMP from dCTP (dUTP route): step 1/2.</text>
</comment>
<comment type="subunit">
    <text evidence="1">Homotrimer.</text>
</comment>
<comment type="similarity">
    <text evidence="1">Belongs to the dCTP deaminase family.</text>
</comment>
<accession>B6INF8</accession>
<gene>
    <name evidence="1" type="primary">dcd</name>
    <name type="ordered locus">RC1_1654</name>
</gene>
<protein>
    <recommendedName>
        <fullName evidence="1">dCTP deaminase</fullName>
        <ecNumber evidence="1">3.5.4.13</ecNumber>
    </recommendedName>
    <alternativeName>
        <fullName evidence="1">Deoxycytidine triphosphate deaminase</fullName>
    </alternativeName>
</protein>
<reference key="1">
    <citation type="submission" date="2007-03" db="EMBL/GenBank/DDBJ databases">
        <title>Genome sequence of Rhodospirillum centenum.</title>
        <authorList>
            <person name="Touchman J.W."/>
            <person name="Bauer C."/>
            <person name="Blankenship R.E."/>
        </authorList>
    </citation>
    <scope>NUCLEOTIDE SEQUENCE [LARGE SCALE GENOMIC DNA]</scope>
    <source>
        <strain>ATCC 51521 / SW</strain>
    </source>
</reference>
<organism>
    <name type="scientific">Rhodospirillum centenum (strain ATCC 51521 / SW)</name>
    <dbReference type="NCBI Taxonomy" id="414684"/>
    <lineage>
        <taxon>Bacteria</taxon>
        <taxon>Pseudomonadati</taxon>
        <taxon>Pseudomonadota</taxon>
        <taxon>Alphaproteobacteria</taxon>
        <taxon>Rhodospirillales</taxon>
        <taxon>Rhodospirillaceae</taxon>
        <taxon>Rhodospirillum</taxon>
    </lineage>
</organism>
<name>DCD_RHOCS</name>
<evidence type="ECO:0000255" key="1">
    <source>
        <dbReference type="HAMAP-Rule" id="MF_00146"/>
    </source>
</evidence>
<proteinExistence type="inferred from homology"/>
<sequence length="184" mass="20661">MPIMPDTWIREMATTKGMIEPFTEAQKREGVISYGLSSYGYDARVADEFKIFTNVDNAIVDPKQFDATSFVDRKTDVCIIPANSFALARTVEYFRIPRDVLVICLGKSTYARCGLIVNVTPLEPEWEGHVTLEISNTTPLPAKVYANEGLCQFLFLKGEGTCEVSYADRAGKYMRQRGVTLPRL</sequence>
<keyword id="KW-0378">Hydrolase</keyword>
<keyword id="KW-0546">Nucleotide metabolism</keyword>
<keyword id="KW-0547">Nucleotide-binding</keyword>
<keyword id="KW-1185">Reference proteome</keyword>
<dbReference type="EC" id="3.5.4.13" evidence="1"/>
<dbReference type="EMBL" id="CP000613">
    <property type="protein sequence ID" value="ACI99055.1"/>
    <property type="molecule type" value="Genomic_DNA"/>
</dbReference>
<dbReference type="RefSeq" id="WP_012566840.1">
    <property type="nucleotide sequence ID" value="NC_011420.2"/>
</dbReference>
<dbReference type="SMR" id="B6INF8"/>
<dbReference type="STRING" id="414684.RC1_1654"/>
<dbReference type="KEGG" id="rce:RC1_1654"/>
<dbReference type="eggNOG" id="COG0717">
    <property type="taxonomic scope" value="Bacteria"/>
</dbReference>
<dbReference type="HOGENOM" id="CLU_087476_4_0_5"/>
<dbReference type="OrthoDB" id="9780956at2"/>
<dbReference type="UniPathway" id="UPA00610">
    <property type="reaction ID" value="UER00665"/>
</dbReference>
<dbReference type="Proteomes" id="UP000001591">
    <property type="component" value="Chromosome"/>
</dbReference>
<dbReference type="GO" id="GO:0008829">
    <property type="term" value="F:dCTP deaminase activity"/>
    <property type="evidence" value="ECO:0007669"/>
    <property type="project" value="UniProtKB-UniRule"/>
</dbReference>
<dbReference type="GO" id="GO:0000166">
    <property type="term" value="F:nucleotide binding"/>
    <property type="evidence" value="ECO:0007669"/>
    <property type="project" value="UniProtKB-KW"/>
</dbReference>
<dbReference type="GO" id="GO:0006226">
    <property type="term" value="P:dUMP biosynthetic process"/>
    <property type="evidence" value="ECO:0007669"/>
    <property type="project" value="UniProtKB-UniPathway"/>
</dbReference>
<dbReference type="GO" id="GO:0006229">
    <property type="term" value="P:dUTP biosynthetic process"/>
    <property type="evidence" value="ECO:0007669"/>
    <property type="project" value="UniProtKB-UniRule"/>
</dbReference>
<dbReference type="CDD" id="cd07557">
    <property type="entry name" value="trimeric_dUTPase"/>
    <property type="match status" value="1"/>
</dbReference>
<dbReference type="FunFam" id="2.70.40.10:FF:000001">
    <property type="entry name" value="dCTP deaminase"/>
    <property type="match status" value="1"/>
</dbReference>
<dbReference type="Gene3D" id="2.70.40.10">
    <property type="match status" value="1"/>
</dbReference>
<dbReference type="HAMAP" id="MF_00146">
    <property type="entry name" value="dCTP_deaminase"/>
    <property type="match status" value="1"/>
</dbReference>
<dbReference type="InterPro" id="IPR011962">
    <property type="entry name" value="dCTP_deaminase"/>
</dbReference>
<dbReference type="InterPro" id="IPR036157">
    <property type="entry name" value="dUTPase-like_sf"/>
</dbReference>
<dbReference type="InterPro" id="IPR033704">
    <property type="entry name" value="dUTPase_trimeric"/>
</dbReference>
<dbReference type="NCBIfam" id="TIGR02274">
    <property type="entry name" value="dCTP_deam"/>
    <property type="match status" value="1"/>
</dbReference>
<dbReference type="PANTHER" id="PTHR42680">
    <property type="entry name" value="DCTP DEAMINASE"/>
    <property type="match status" value="1"/>
</dbReference>
<dbReference type="PANTHER" id="PTHR42680:SF3">
    <property type="entry name" value="DCTP DEAMINASE"/>
    <property type="match status" value="1"/>
</dbReference>
<dbReference type="Pfam" id="PF22769">
    <property type="entry name" value="DCD"/>
    <property type="match status" value="1"/>
</dbReference>
<dbReference type="SUPFAM" id="SSF51283">
    <property type="entry name" value="dUTPase-like"/>
    <property type="match status" value="1"/>
</dbReference>